<reference key="1">
    <citation type="journal article" date="2005" name="J. Virol. Methods">
        <title>Shotgun sequencing of the negative-sense RNA genome of the rhabdovirus Maize mosaic virus.</title>
        <authorList>
            <person name="Reed S.E."/>
            <person name="Tsai C.W."/>
            <person name="Willie K.J."/>
            <person name="Redinbaugh M.G."/>
            <person name="Hogenhout S.A."/>
        </authorList>
    </citation>
    <scope>NUCLEOTIDE SEQUENCE [GENOMIC RNA]</scope>
</reference>
<sequence>MEPSAEIPLGKGKETGRSPLIATRRKTGLVKAKIKTNSSFSMFRRADTMRTHAQFTNITVGWKSLCPITAEGQVNVAIYHESTRVPVLNLWSPVSSSWKHLATGSLGFVSLNHCPYVVEGRISGFEGEEAGLVTLTLHLDTGLESDDIQKCRLFSEHPELAGGSLYLYTSYTSSPIPDSNLPALRTEIDDTIAAIWRMSGGKMSITTSHALGLIATFRVKIESLLGEYPDDAFSAQVENLVKDFLLVSSTAEITRSYRTCLAKVLSSMTTYDKKYWDTIITGPSSI</sequence>
<accession>Q6E0W9</accession>
<organismHost>
    <name type="scientific">Rottboellia</name>
    <dbReference type="NCBI Taxonomy" id="300124"/>
</organismHost>
<organismHost>
    <name type="scientific">Setaria</name>
    <dbReference type="NCBI Taxonomy" id="4554"/>
</organismHost>
<organismHost>
    <name type="scientific">Sorghum bicolor</name>
    <name type="common">Sorghum</name>
    <name type="synonym">Sorghum vulgare</name>
    <dbReference type="NCBI Taxonomy" id="4558"/>
</organismHost>
<organismHost>
    <name type="scientific">Zea mays</name>
    <name type="common">Maize</name>
    <dbReference type="NCBI Taxonomy" id="4577"/>
</organismHost>
<name>MVP_MMVR</name>
<proteinExistence type="inferred from homology"/>
<keyword id="KW-0945">Host-virus interaction</keyword>
<keyword id="KW-1185">Reference proteome</keyword>
<keyword id="KW-0694">RNA-binding</keyword>
<keyword id="KW-0813">Transport</keyword>
<keyword id="KW-0916">Viral movement protein</keyword>
<protein>
    <recommendedName>
        <fullName>Putative movement protein 3</fullName>
        <shortName>MP</shortName>
    </recommendedName>
    <alternativeName>
        <fullName>Cell-to-cell transport protein</fullName>
    </alternativeName>
    <alternativeName>
        <fullName>Protein 3</fullName>
    </alternativeName>
</protein>
<evidence type="ECO:0000250" key="1"/>
<evidence type="ECO:0000305" key="2"/>
<organism>
    <name type="scientific">Maize mosaic virus (isolate Maize/United States/Reed/2005)</name>
    <name type="common">MMV</name>
    <dbReference type="NCBI Taxonomy" id="928305"/>
    <lineage>
        <taxon>Viruses</taxon>
        <taxon>Riboviria</taxon>
        <taxon>Orthornavirae</taxon>
        <taxon>Negarnaviricota</taxon>
        <taxon>Haploviricotina</taxon>
        <taxon>Monjiviricetes</taxon>
        <taxon>Mononegavirales</taxon>
        <taxon>Rhabdoviridae</taxon>
        <taxon>Betarhabdovirinae</taxon>
        <taxon>Alphanucleorhabdovirus</taxon>
        <taxon>Alphanucleorhabdovirus maydis</taxon>
    </lineage>
</organism>
<dbReference type="EMBL" id="AY618418">
    <property type="protein sequence ID" value="AAT66754.1"/>
    <property type="molecule type" value="Genomic_RNA"/>
</dbReference>
<dbReference type="RefSeq" id="YP_052852.1">
    <property type="nucleotide sequence ID" value="NC_005975.1"/>
</dbReference>
<dbReference type="GeneID" id="2886121"/>
<dbReference type="KEGG" id="vg:2886121"/>
<dbReference type="Proteomes" id="UP000008593">
    <property type="component" value="Segment"/>
</dbReference>
<dbReference type="GO" id="GO:0003723">
    <property type="term" value="F:RNA binding"/>
    <property type="evidence" value="ECO:0007669"/>
    <property type="project" value="UniProtKB-KW"/>
</dbReference>
<dbReference type="GO" id="GO:0046740">
    <property type="term" value="P:transport of virus in host, cell to cell"/>
    <property type="evidence" value="ECO:0007669"/>
    <property type="project" value="UniProtKB-KW"/>
</dbReference>
<comment type="function">
    <text evidence="1">Transports viral genome to neighboring plant cells directly through plasmosdesmata, without any budding. The movement protein allows efficient cell to cell propagation, by bypassing the host cell wall barrier (By similarity).</text>
</comment>
<comment type="similarity">
    <text evidence="2">Belongs to the nucleorhabdovirus type-1 movement protein family.</text>
</comment>
<gene>
    <name type="primary">3</name>
</gene>
<feature type="chain" id="PRO_0000299229" description="Putative movement protein 3">
    <location>
        <begin position="1"/>
        <end position="286"/>
    </location>
</feature>